<keyword id="KW-0210">Decarboxylase</keyword>
<keyword id="KW-0456">Lyase</keyword>
<keyword id="KW-0665">Pyrimidine biosynthesis</keyword>
<keyword id="KW-1185">Reference proteome</keyword>
<sequence>MKLCVAFDVASYDECINLAKELKGLDLWVKIGLRSYLRDGVKLLEAIKKVDNFKIFLDLKLYDIPNTMADACEELAKLDVNMFNIHASAGKSAMCMIMERLNALSKRPLVLAVSALTSFDEQEFFSVYKQDIKQAVKDFSKISYESGLDGMVCSVYESLLIKENTSANFITLTPGIRPFKENSDDQKRVADIQCAKDNLSDFIVVGRPIYKAKEPRRICENILEHLK</sequence>
<accession>B9KFP1</accession>
<organism>
    <name type="scientific">Campylobacter lari (strain RM2100 / D67 / ATCC BAA-1060)</name>
    <dbReference type="NCBI Taxonomy" id="306263"/>
    <lineage>
        <taxon>Bacteria</taxon>
        <taxon>Pseudomonadati</taxon>
        <taxon>Campylobacterota</taxon>
        <taxon>Epsilonproteobacteria</taxon>
        <taxon>Campylobacterales</taxon>
        <taxon>Campylobacteraceae</taxon>
        <taxon>Campylobacter</taxon>
    </lineage>
</organism>
<proteinExistence type="inferred from homology"/>
<comment type="function">
    <text evidence="1">Catalyzes the decarboxylation of orotidine 5'-monophosphate (OMP) to uridine 5'-monophosphate (UMP).</text>
</comment>
<comment type="catalytic activity">
    <reaction evidence="1">
        <text>orotidine 5'-phosphate + H(+) = UMP + CO2</text>
        <dbReference type="Rhea" id="RHEA:11596"/>
        <dbReference type="ChEBI" id="CHEBI:15378"/>
        <dbReference type="ChEBI" id="CHEBI:16526"/>
        <dbReference type="ChEBI" id="CHEBI:57538"/>
        <dbReference type="ChEBI" id="CHEBI:57865"/>
        <dbReference type="EC" id="4.1.1.23"/>
    </reaction>
</comment>
<comment type="pathway">
    <text evidence="1">Pyrimidine metabolism; UMP biosynthesis via de novo pathway; UMP from orotate: step 2/2.</text>
</comment>
<comment type="subunit">
    <text evidence="1">Homodimer.</text>
</comment>
<comment type="similarity">
    <text evidence="1">Belongs to the OMP decarboxylase family. Type 1 subfamily.</text>
</comment>
<feature type="chain" id="PRO_1000164564" description="Orotidine 5'-phosphate decarboxylase">
    <location>
        <begin position="1"/>
        <end position="227"/>
    </location>
</feature>
<feature type="active site" description="Proton donor" evidence="1">
    <location>
        <position position="60"/>
    </location>
</feature>
<feature type="binding site" evidence="1">
    <location>
        <position position="8"/>
    </location>
    <ligand>
        <name>substrate</name>
    </ligand>
</feature>
<feature type="binding site" evidence="1">
    <location>
        <position position="30"/>
    </location>
    <ligand>
        <name>substrate</name>
    </ligand>
</feature>
<feature type="binding site" evidence="1">
    <location>
        <begin position="58"/>
        <end position="67"/>
    </location>
    <ligand>
        <name>substrate</name>
    </ligand>
</feature>
<feature type="binding site" evidence="1">
    <location>
        <position position="117"/>
    </location>
    <ligand>
        <name>substrate</name>
    </ligand>
</feature>
<feature type="binding site" evidence="1">
    <location>
        <position position="177"/>
    </location>
    <ligand>
        <name>substrate</name>
    </ligand>
</feature>
<feature type="binding site" evidence="1">
    <location>
        <position position="186"/>
    </location>
    <ligand>
        <name>substrate</name>
    </ligand>
</feature>
<feature type="binding site" evidence="1">
    <location>
        <position position="206"/>
    </location>
    <ligand>
        <name>substrate</name>
    </ligand>
</feature>
<feature type="binding site" evidence="1">
    <location>
        <position position="207"/>
    </location>
    <ligand>
        <name>substrate</name>
    </ligand>
</feature>
<dbReference type="EC" id="4.1.1.23" evidence="1"/>
<dbReference type="EMBL" id="CP000932">
    <property type="protein sequence ID" value="ACM63876.1"/>
    <property type="molecule type" value="Genomic_DNA"/>
</dbReference>
<dbReference type="RefSeq" id="WP_012661259.1">
    <property type="nucleotide sequence ID" value="NC_012039.1"/>
</dbReference>
<dbReference type="SMR" id="B9KFP1"/>
<dbReference type="STRING" id="306263.Cla_0542"/>
<dbReference type="KEGG" id="cla:CLA_0542"/>
<dbReference type="PATRIC" id="fig|306263.5.peg.525"/>
<dbReference type="eggNOG" id="COG0284">
    <property type="taxonomic scope" value="Bacteria"/>
</dbReference>
<dbReference type="HOGENOM" id="CLU_067069_1_1_7"/>
<dbReference type="UniPathway" id="UPA00070">
    <property type="reaction ID" value="UER00120"/>
</dbReference>
<dbReference type="Proteomes" id="UP000007727">
    <property type="component" value="Chromosome"/>
</dbReference>
<dbReference type="GO" id="GO:0005829">
    <property type="term" value="C:cytosol"/>
    <property type="evidence" value="ECO:0007669"/>
    <property type="project" value="TreeGrafter"/>
</dbReference>
<dbReference type="GO" id="GO:0004590">
    <property type="term" value="F:orotidine-5'-phosphate decarboxylase activity"/>
    <property type="evidence" value="ECO:0007669"/>
    <property type="project" value="UniProtKB-UniRule"/>
</dbReference>
<dbReference type="GO" id="GO:0006207">
    <property type="term" value="P:'de novo' pyrimidine nucleobase biosynthetic process"/>
    <property type="evidence" value="ECO:0007669"/>
    <property type="project" value="InterPro"/>
</dbReference>
<dbReference type="GO" id="GO:0044205">
    <property type="term" value="P:'de novo' UMP biosynthetic process"/>
    <property type="evidence" value="ECO:0007669"/>
    <property type="project" value="UniProtKB-UniRule"/>
</dbReference>
<dbReference type="CDD" id="cd04725">
    <property type="entry name" value="OMP_decarboxylase_like"/>
    <property type="match status" value="1"/>
</dbReference>
<dbReference type="Gene3D" id="3.20.20.70">
    <property type="entry name" value="Aldolase class I"/>
    <property type="match status" value="1"/>
</dbReference>
<dbReference type="HAMAP" id="MF_01200_B">
    <property type="entry name" value="OMPdecase_type1_B"/>
    <property type="match status" value="1"/>
</dbReference>
<dbReference type="InterPro" id="IPR013785">
    <property type="entry name" value="Aldolase_TIM"/>
</dbReference>
<dbReference type="InterPro" id="IPR014732">
    <property type="entry name" value="OMPdecase"/>
</dbReference>
<dbReference type="InterPro" id="IPR018089">
    <property type="entry name" value="OMPdecase_AS"/>
</dbReference>
<dbReference type="InterPro" id="IPR047596">
    <property type="entry name" value="OMPdecase_bac"/>
</dbReference>
<dbReference type="InterPro" id="IPR001754">
    <property type="entry name" value="OMPdeCOase_dom"/>
</dbReference>
<dbReference type="InterPro" id="IPR011060">
    <property type="entry name" value="RibuloseP-bd_barrel"/>
</dbReference>
<dbReference type="NCBIfam" id="NF001273">
    <property type="entry name" value="PRK00230.1"/>
    <property type="match status" value="1"/>
</dbReference>
<dbReference type="NCBIfam" id="TIGR01740">
    <property type="entry name" value="pyrF"/>
    <property type="match status" value="1"/>
</dbReference>
<dbReference type="PANTHER" id="PTHR32119">
    <property type="entry name" value="OROTIDINE 5'-PHOSPHATE DECARBOXYLASE"/>
    <property type="match status" value="1"/>
</dbReference>
<dbReference type="PANTHER" id="PTHR32119:SF2">
    <property type="entry name" value="OROTIDINE 5'-PHOSPHATE DECARBOXYLASE"/>
    <property type="match status" value="1"/>
</dbReference>
<dbReference type="Pfam" id="PF00215">
    <property type="entry name" value="OMPdecase"/>
    <property type="match status" value="1"/>
</dbReference>
<dbReference type="SMART" id="SM00934">
    <property type="entry name" value="OMPdecase"/>
    <property type="match status" value="1"/>
</dbReference>
<dbReference type="SUPFAM" id="SSF51366">
    <property type="entry name" value="Ribulose-phoshate binding barrel"/>
    <property type="match status" value="1"/>
</dbReference>
<dbReference type="PROSITE" id="PS00156">
    <property type="entry name" value="OMPDECASE"/>
    <property type="match status" value="1"/>
</dbReference>
<gene>
    <name evidence="1" type="primary">pyrF</name>
    <name type="ordered locus">Cla_0542</name>
</gene>
<evidence type="ECO:0000255" key="1">
    <source>
        <dbReference type="HAMAP-Rule" id="MF_01200"/>
    </source>
</evidence>
<reference key="1">
    <citation type="journal article" date="2008" name="Foodborne Pathog. Dis.">
        <title>The complete genome sequence and analysis of the human pathogen Campylobacter lari.</title>
        <authorList>
            <person name="Miller W.G."/>
            <person name="Wang G."/>
            <person name="Binnewies T.T."/>
            <person name="Parker C.T."/>
        </authorList>
    </citation>
    <scope>NUCLEOTIDE SEQUENCE [LARGE SCALE GENOMIC DNA]</scope>
    <source>
        <strain>RM2100 / D67 / ATCC BAA-1060</strain>
    </source>
</reference>
<name>PYRF_CAMLR</name>
<protein>
    <recommendedName>
        <fullName evidence="1">Orotidine 5'-phosphate decarboxylase</fullName>
        <ecNumber evidence="1">4.1.1.23</ecNumber>
    </recommendedName>
    <alternativeName>
        <fullName evidence="1">OMP decarboxylase</fullName>
        <shortName evidence="1">OMPDCase</shortName>
        <shortName evidence="1">OMPdecase</shortName>
    </alternativeName>
</protein>